<protein>
    <recommendedName>
        <fullName>UPF0758 protein Cvib_1178</fullName>
    </recommendedName>
</protein>
<keyword id="KW-0378">Hydrolase</keyword>
<keyword id="KW-0479">Metal-binding</keyword>
<keyword id="KW-0482">Metalloprotease</keyword>
<keyword id="KW-0645">Protease</keyword>
<keyword id="KW-0862">Zinc</keyword>
<comment type="similarity">
    <text evidence="2">Belongs to the UPF0758 family.</text>
</comment>
<feature type="chain" id="PRO_1000089832" description="UPF0758 protein Cvib_1178">
    <location>
        <begin position="1"/>
        <end position="223"/>
    </location>
</feature>
<feature type="domain" description="MPN" evidence="1">
    <location>
        <begin position="100"/>
        <end position="222"/>
    </location>
</feature>
<feature type="short sequence motif" description="JAMM motif" evidence="1">
    <location>
        <begin position="171"/>
        <end position="184"/>
    </location>
</feature>
<feature type="binding site" evidence="1">
    <location>
        <position position="171"/>
    </location>
    <ligand>
        <name>Zn(2+)</name>
        <dbReference type="ChEBI" id="CHEBI:29105"/>
        <note>catalytic</note>
    </ligand>
</feature>
<feature type="binding site" evidence="1">
    <location>
        <position position="173"/>
    </location>
    <ligand>
        <name>Zn(2+)</name>
        <dbReference type="ChEBI" id="CHEBI:29105"/>
        <note>catalytic</note>
    </ligand>
</feature>
<feature type="binding site" evidence="1">
    <location>
        <position position="184"/>
    </location>
    <ligand>
        <name>Zn(2+)</name>
        <dbReference type="ChEBI" id="CHEBI:29105"/>
        <note>catalytic</note>
    </ligand>
</feature>
<dbReference type="EMBL" id="CP000607">
    <property type="protein sequence ID" value="ABP37190.1"/>
    <property type="molecule type" value="Genomic_DNA"/>
</dbReference>
<dbReference type="SMR" id="A4SFD1"/>
<dbReference type="STRING" id="290318.Cvib_1178"/>
<dbReference type="KEGG" id="pvi:Cvib_1178"/>
<dbReference type="eggNOG" id="COG2003">
    <property type="taxonomic scope" value="Bacteria"/>
</dbReference>
<dbReference type="HOGENOM" id="CLU_073529_0_2_10"/>
<dbReference type="OrthoDB" id="9804482at2"/>
<dbReference type="GO" id="GO:0046872">
    <property type="term" value="F:metal ion binding"/>
    <property type="evidence" value="ECO:0007669"/>
    <property type="project" value="UniProtKB-KW"/>
</dbReference>
<dbReference type="GO" id="GO:0008237">
    <property type="term" value="F:metallopeptidase activity"/>
    <property type="evidence" value="ECO:0007669"/>
    <property type="project" value="UniProtKB-KW"/>
</dbReference>
<dbReference type="GO" id="GO:0006508">
    <property type="term" value="P:proteolysis"/>
    <property type="evidence" value="ECO:0007669"/>
    <property type="project" value="UniProtKB-KW"/>
</dbReference>
<dbReference type="CDD" id="cd08071">
    <property type="entry name" value="MPN_DUF2466"/>
    <property type="match status" value="1"/>
</dbReference>
<dbReference type="Gene3D" id="3.40.140.10">
    <property type="entry name" value="Cytidine Deaminase, domain 2"/>
    <property type="match status" value="1"/>
</dbReference>
<dbReference type="InterPro" id="IPR037518">
    <property type="entry name" value="MPN"/>
</dbReference>
<dbReference type="InterPro" id="IPR025657">
    <property type="entry name" value="RadC_JAB"/>
</dbReference>
<dbReference type="InterPro" id="IPR010994">
    <property type="entry name" value="RuvA_2-like"/>
</dbReference>
<dbReference type="InterPro" id="IPR001405">
    <property type="entry name" value="UPF0758"/>
</dbReference>
<dbReference type="InterPro" id="IPR020891">
    <property type="entry name" value="UPF0758_CS"/>
</dbReference>
<dbReference type="InterPro" id="IPR046778">
    <property type="entry name" value="UPF0758_N"/>
</dbReference>
<dbReference type="NCBIfam" id="NF000642">
    <property type="entry name" value="PRK00024.1"/>
    <property type="match status" value="1"/>
</dbReference>
<dbReference type="NCBIfam" id="TIGR00608">
    <property type="entry name" value="radc"/>
    <property type="match status" value="1"/>
</dbReference>
<dbReference type="PANTHER" id="PTHR30471">
    <property type="entry name" value="DNA REPAIR PROTEIN RADC"/>
    <property type="match status" value="1"/>
</dbReference>
<dbReference type="PANTHER" id="PTHR30471:SF3">
    <property type="entry name" value="UPF0758 PROTEIN YEES-RELATED"/>
    <property type="match status" value="1"/>
</dbReference>
<dbReference type="Pfam" id="PF04002">
    <property type="entry name" value="RadC"/>
    <property type="match status" value="1"/>
</dbReference>
<dbReference type="Pfam" id="PF20582">
    <property type="entry name" value="UPF0758_N"/>
    <property type="match status" value="1"/>
</dbReference>
<dbReference type="SUPFAM" id="SSF102712">
    <property type="entry name" value="JAB1/MPN domain"/>
    <property type="match status" value="1"/>
</dbReference>
<dbReference type="SUPFAM" id="SSF47781">
    <property type="entry name" value="RuvA domain 2-like"/>
    <property type="match status" value="1"/>
</dbReference>
<dbReference type="PROSITE" id="PS50249">
    <property type="entry name" value="MPN"/>
    <property type="match status" value="1"/>
</dbReference>
<dbReference type="PROSITE" id="PS01302">
    <property type="entry name" value="UPF0758"/>
    <property type="match status" value="1"/>
</dbReference>
<organism>
    <name type="scientific">Chlorobium phaeovibrioides (strain DSM 265 / 1930)</name>
    <name type="common">Prosthecochloris vibrioformis (strain DSM 265)</name>
    <dbReference type="NCBI Taxonomy" id="290318"/>
    <lineage>
        <taxon>Bacteria</taxon>
        <taxon>Pseudomonadati</taxon>
        <taxon>Chlorobiota</taxon>
        <taxon>Chlorobiia</taxon>
        <taxon>Chlorobiales</taxon>
        <taxon>Chlorobiaceae</taxon>
        <taxon>Chlorobium/Pelodictyon group</taxon>
        <taxon>Chlorobium</taxon>
    </lineage>
</organism>
<reference key="1">
    <citation type="submission" date="2007-03" db="EMBL/GenBank/DDBJ databases">
        <title>Complete sequence of Prosthecochloris vibrioformis DSM 265.</title>
        <authorList>
            <consortium name="US DOE Joint Genome Institute"/>
            <person name="Copeland A."/>
            <person name="Lucas S."/>
            <person name="Lapidus A."/>
            <person name="Barry K."/>
            <person name="Detter J.C."/>
            <person name="Glavina del Rio T."/>
            <person name="Hammon N."/>
            <person name="Israni S."/>
            <person name="Pitluck S."/>
            <person name="Schmutz J."/>
            <person name="Larimer F."/>
            <person name="Land M."/>
            <person name="Hauser L."/>
            <person name="Mikhailova N."/>
            <person name="Li T."/>
            <person name="Overmann J."/>
            <person name="Schuster S.C."/>
            <person name="Bryant D.A."/>
            <person name="Richardson P."/>
        </authorList>
    </citation>
    <scope>NUCLEOTIDE SEQUENCE [LARGE SCALE GENOMIC DNA]</scope>
    <source>
        <strain>DSM 265 / 1930</strain>
    </source>
</reference>
<evidence type="ECO:0000255" key="1">
    <source>
        <dbReference type="PROSITE-ProRule" id="PRU01182"/>
    </source>
</evidence>
<evidence type="ECO:0000305" key="2"/>
<sequence length="223" mass="25068">MRIADFDPENRPRERFIAHGPAALSSAELLAIVLRTGTRKNNILDTCNTLLSLHGLEALANMNLKELQKTSGIGPSKAMQITAIFELNKRLHYKRNTNRKIQGARDVYEYMQGRVPDETKEHLFVLHLNTKNQITKCEEVTIGTLNASLIHPREVFKAAIRESANAIILVHNHPSGDTEPSNADRQVTNLLKQASAVIQIDLLDHVIIGKTGWYSFRENNQLS</sequence>
<name>Y1178_CHLPM</name>
<gene>
    <name type="ordered locus">Cvib_1178</name>
</gene>
<proteinExistence type="inferred from homology"/>
<accession>A4SFD1</accession>